<protein>
    <recommendedName>
        <fullName evidence="1">Aminomethyltransferase</fullName>
        <ecNumber evidence="1">2.1.2.10</ecNumber>
    </recommendedName>
    <alternativeName>
        <fullName evidence="1">Glycine cleavage system T protein</fullName>
    </alternativeName>
</protein>
<sequence>MAQQTPLYEQHTLCGARMVDFHGWMMPLHYGSQIDEHHAVRTDAGMFDVSHMTIVDLRGSRTREFLRYLLANDVAKLTKSGKALYSGMLNASGGVIDDLIVYYFTEDFFRLVVNSATREKDLSWITQHAEPFGIEITVRDDLSMIAVQGPNAQAKAATLFNDAQRQAVEGMKPFFGVQAGDLFIATTGYTGEAGYEIALPNEKAADFWRALVEAGVKPCGLGARDTLRLEAGMNLYGQEMDETISPLAANMGWTIAWEPADRDFIGREALEVQREHGTEKLVGLVMTEKGVLRNELPVRFTDAQGNQHEGIITSGTFSPTLGYSIALARVPEGIGETAIVQIRNREMPVKVTKPVFVRNGKAVA</sequence>
<accession>P27248</accession>
<accession>Q2M9T6</accession>
<feature type="initiator methionine" description="Removed" evidence="2 3">
    <location>
        <position position="1"/>
    </location>
</feature>
<feature type="chain" id="PRO_0000122554" description="Aminomethyltransferase">
    <location>
        <begin position="2"/>
        <end position="364"/>
    </location>
</feature>
<feature type="helix" evidence="6">
    <location>
        <begin position="8"/>
        <end position="13"/>
    </location>
</feature>
<feature type="strand" evidence="6">
    <location>
        <begin position="17"/>
        <end position="21"/>
    </location>
</feature>
<feature type="strand" evidence="6">
    <location>
        <begin position="24"/>
        <end position="31"/>
    </location>
</feature>
<feature type="helix" evidence="6">
    <location>
        <begin position="33"/>
        <end position="42"/>
    </location>
</feature>
<feature type="strand" evidence="6">
    <location>
        <begin position="45"/>
        <end position="48"/>
    </location>
</feature>
<feature type="strand" evidence="6">
    <location>
        <begin position="52"/>
        <end position="59"/>
    </location>
</feature>
<feature type="helix" evidence="6">
    <location>
        <begin position="62"/>
        <end position="69"/>
    </location>
</feature>
<feature type="strand" evidence="6">
    <location>
        <begin position="70"/>
        <end position="72"/>
    </location>
</feature>
<feature type="helix" evidence="6">
    <location>
        <begin position="74"/>
        <end position="76"/>
    </location>
</feature>
<feature type="strand" evidence="6">
    <location>
        <begin position="82"/>
        <end position="89"/>
    </location>
</feature>
<feature type="strand" evidence="6">
    <location>
        <begin position="95"/>
        <end position="105"/>
    </location>
</feature>
<feature type="strand" evidence="6">
    <location>
        <begin position="108"/>
        <end position="113"/>
    </location>
</feature>
<feature type="helix" evidence="6">
    <location>
        <begin position="115"/>
        <end position="117"/>
    </location>
</feature>
<feature type="helix" evidence="6">
    <location>
        <begin position="118"/>
        <end position="129"/>
    </location>
</feature>
<feature type="helix" evidence="6">
    <location>
        <begin position="130"/>
        <end position="132"/>
    </location>
</feature>
<feature type="strand" evidence="6">
    <location>
        <begin position="135"/>
        <end position="138"/>
    </location>
</feature>
<feature type="strand" evidence="6">
    <location>
        <begin position="142"/>
        <end position="149"/>
    </location>
</feature>
<feature type="helix" evidence="6">
    <location>
        <begin position="152"/>
        <end position="157"/>
    </location>
</feature>
<feature type="helix" evidence="6">
    <location>
        <begin position="162"/>
        <end position="168"/>
    </location>
</feature>
<feature type="strand" evidence="6">
    <location>
        <begin position="173"/>
        <end position="179"/>
    </location>
</feature>
<feature type="strand" evidence="6">
    <location>
        <begin position="182"/>
        <end position="185"/>
    </location>
</feature>
<feature type="strand" evidence="6">
    <location>
        <begin position="189"/>
        <end position="192"/>
    </location>
</feature>
<feature type="strand" evidence="6">
    <location>
        <begin position="194"/>
        <end position="200"/>
    </location>
</feature>
<feature type="helix" evidence="6">
    <location>
        <begin position="201"/>
        <end position="213"/>
    </location>
</feature>
<feature type="helix" evidence="6">
    <location>
        <begin position="221"/>
        <end position="230"/>
    </location>
</feature>
<feature type="turn" evidence="6">
    <location>
        <begin position="236"/>
        <end position="238"/>
    </location>
</feature>
<feature type="helix" evidence="6">
    <location>
        <begin position="246"/>
        <end position="248"/>
    </location>
</feature>
<feature type="helix" evidence="6">
    <location>
        <begin position="252"/>
        <end position="254"/>
    </location>
</feature>
<feature type="helix" evidence="6">
    <location>
        <begin position="267"/>
        <end position="276"/>
    </location>
</feature>
<feature type="strand" evidence="6">
    <location>
        <begin position="280"/>
        <end position="286"/>
    </location>
</feature>
<feature type="strand" evidence="6">
    <location>
        <begin position="288"/>
        <end position="290"/>
    </location>
</feature>
<feature type="strand" evidence="6">
    <location>
        <begin position="297"/>
        <end position="301"/>
    </location>
</feature>
<feature type="strand" evidence="6">
    <location>
        <begin position="307"/>
        <end position="318"/>
    </location>
</feature>
<feature type="turn" evidence="6">
    <location>
        <begin position="319"/>
        <end position="322"/>
    </location>
</feature>
<feature type="strand" evidence="6">
    <location>
        <begin position="323"/>
        <end position="330"/>
    </location>
</feature>
<feature type="strand" evidence="6">
    <location>
        <begin position="336"/>
        <end position="342"/>
    </location>
</feature>
<feature type="strand" evidence="6">
    <location>
        <begin position="345"/>
        <end position="352"/>
    </location>
</feature>
<feature type="strand" evidence="7">
    <location>
        <begin position="356"/>
        <end position="358"/>
    </location>
</feature>
<dbReference type="EC" id="2.1.2.10" evidence="1"/>
<dbReference type="EMBL" id="M97263">
    <property type="protein sequence ID" value="AAC36843.1"/>
    <property type="molecule type" value="Unassigned_DNA"/>
</dbReference>
<dbReference type="EMBL" id="X73958">
    <property type="protein sequence ID" value="CAA52144.1"/>
    <property type="molecule type" value="Genomic_DNA"/>
</dbReference>
<dbReference type="EMBL" id="U28377">
    <property type="protein sequence ID" value="AAA69073.1"/>
    <property type="molecule type" value="Genomic_DNA"/>
</dbReference>
<dbReference type="EMBL" id="U00096">
    <property type="protein sequence ID" value="AAC75943.1"/>
    <property type="molecule type" value="Genomic_DNA"/>
</dbReference>
<dbReference type="EMBL" id="AP009048">
    <property type="protein sequence ID" value="BAE76970.1"/>
    <property type="molecule type" value="Genomic_DNA"/>
</dbReference>
<dbReference type="PIR" id="A56689">
    <property type="entry name" value="A56689"/>
</dbReference>
<dbReference type="RefSeq" id="NP_417381.1">
    <property type="nucleotide sequence ID" value="NC_000913.3"/>
</dbReference>
<dbReference type="RefSeq" id="WP_000068701.1">
    <property type="nucleotide sequence ID" value="NZ_STEB01000001.1"/>
</dbReference>
<dbReference type="PDB" id="1VLO">
    <property type="method" value="X-ray"/>
    <property type="resolution" value="1.70 A"/>
    <property type="chains" value="A=2-363"/>
</dbReference>
<dbReference type="PDB" id="3A8I">
    <property type="method" value="X-ray"/>
    <property type="resolution" value="1.99 A"/>
    <property type="chains" value="A/B/C/D=1-364"/>
</dbReference>
<dbReference type="PDB" id="3A8J">
    <property type="method" value="X-ray"/>
    <property type="resolution" value="1.98 A"/>
    <property type="chains" value="A/B/C/D=1-364"/>
</dbReference>
<dbReference type="PDB" id="3A8K">
    <property type="method" value="X-ray"/>
    <property type="resolution" value="1.95 A"/>
    <property type="chains" value="A/B/C/D=1-364"/>
</dbReference>
<dbReference type="PDBsum" id="1VLO"/>
<dbReference type="PDBsum" id="3A8I"/>
<dbReference type="PDBsum" id="3A8J"/>
<dbReference type="PDBsum" id="3A8K"/>
<dbReference type="SMR" id="P27248"/>
<dbReference type="BioGRID" id="4262343">
    <property type="interactions" value="51"/>
</dbReference>
<dbReference type="ComplexPortal" id="CPX-3949">
    <property type="entry name" value="Glycine cleavage system complex"/>
</dbReference>
<dbReference type="FunCoup" id="P27248">
    <property type="interactions" value="853"/>
</dbReference>
<dbReference type="IntAct" id="P27248">
    <property type="interactions" value="6"/>
</dbReference>
<dbReference type="STRING" id="511145.b2905"/>
<dbReference type="jPOST" id="P27248"/>
<dbReference type="PaxDb" id="511145-b2905"/>
<dbReference type="EnsemblBacteria" id="AAC75943">
    <property type="protein sequence ID" value="AAC75943"/>
    <property type="gene ID" value="b2905"/>
</dbReference>
<dbReference type="GeneID" id="75205258"/>
<dbReference type="GeneID" id="947390"/>
<dbReference type="KEGG" id="ecj:JW2873"/>
<dbReference type="KEGG" id="eco:b2905"/>
<dbReference type="KEGG" id="ecoc:C3026_15925"/>
<dbReference type="PATRIC" id="fig|1411691.4.peg.3827"/>
<dbReference type="EchoBASE" id="EB1412"/>
<dbReference type="eggNOG" id="COG0404">
    <property type="taxonomic scope" value="Bacteria"/>
</dbReference>
<dbReference type="HOGENOM" id="CLU_007884_10_2_6"/>
<dbReference type="InParanoid" id="P27248"/>
<dbReference type="OMA" id="MPVQYPA"/>
<dbReference type="OrthoDB" id="9774591at2"/>
<dbReference type="PhylomeDB" id="P27248"/>
<dbReference type="BioCyc" id="EcoCyc:GCVT-MONOMER"/>
<dbReference type="BioCyc" id="MetaCyc:GCVT-MONOMER"/>
<dbReference type="BRENDA" id="1.4.1.27">
    <property type="organism ID" value="2026"/>
</dbReference>
<dbReference type="EvolutionaryTrace" id="P27248"/>
<dbReference type="PRO" id="PR:P27248"/>
<dbReference type="Proteomes" id="UP000000625">
    <property type="component" value="Chromosome"/>
</dbReference>
<dbReference type="GO" id="GO:0005829">
    <property type="term" value="C:cytosol"/>
    <property type="evidence" value="ECO:0000314"/>
    <property type="project" value="EcoCyc"/>
</dbReference>
<dbReference type="GO" id="GO:0005960">
    <property type="term" value="C:glycine cleavage complex"/>
    <property type="evidence" value="ECO:0000303"/>
    <property type="project" value="ComplexPortal"/>
</dbReference>
<dbReference type="GO" id="GO:0004047">
    <property type="term" value="F:aminomethyltransferase activity"/>
    <property type="evidence" value="ECO:0000314"/>
    <property type="project" value="EcoCyc"/>
</dbReference>
<dbReference type="GO" id="GO:0008483">
    <property type="term" value="F:transaminase activity"/>
    <property type="evidence" value="ECO:0007669"/>
    <property type="project" value="UniProtKB-KW"/>
</dbReference>
<dbReference type="GO" id="GO:0019464">
    <property type="term" value="P:glycine decarboxylation via glycine cleavage system"/>
    <property type="evidence" value="ECO:0000303"/>
    <property type="project" value="ComplexPortal"/>
</dbReference>
<dbReference type="GO" id="GO:0006730">
    <property type="term" value="P:one-carbon metabolic process"/>
    <property type="evidence" value="ECO:0000303"/>
    <property type="project" value="ComplexPortal"/>
</dbReference>
<dbReference type="FunFam" id="2.40.30.110:FF:000001">
    <property type="entry name" value="Aminomethyltransferase"/>
    <property type="match status" value="1"/>
</dbReference>
<dbReference type="FunFam" id="3.30.70.1400:FF:000001">
    <property type="entry name" value="Aminomethyltransferase"/>
    <property type="match status" value="1"/>
</dbReference>
<dbReference type="FunFam" id="4.10.1250.10:FF:000001">
    <property type="entry name" value="Aminomethyltransferase"/>
    <property type="match status" value="1"/>
</dbReference>
<dbReference type="Gene3D" id="2.40.30.110">
    <property type="entry name" value="Aminomethyltransferase beta-barrel domains"/>
    <property type="match status" value="1"/>
</dbReference>
<dbReference type="Gene3D" id="3.30.70.1400">
    <property type="entry name" value="Aminomethyltransferase beta-barrel domains"/>
    <property type="match status" value="1"/>
</dbReference>
<dbReference type="Gene3D" id="4.10.1250.10">
    <property type="entry name" value="Aminomethyltransferase fragment"/>
    <property type="match status" value="1"/>
</dbReference>
<dbReference type="Gene3D" id="3.30.1360.120">
    <property type="entry name" value="Probable tRNA modification gtpase trme, domain 1"/>
    <property type="match status" value="1"/>
</dbReference>
<dbReference type="HAMAP" id="MF_00259">
    <property type="entry name" value="GcvT"/>
    <property type="match status" value="1"/>
</dbReference>
<dbReference type="InterPro" id="IPR006223">
    <property type="entry name" value="GCS_T"/>
</dbReference>
<dbReference type="InterPro" id="IPR022903">
    <property type="entry name" value="GCS_T_bac"/>
</dbReference>
<dbReference type="InterPro" id="IPR013977">
    <property type="entry name" value="GCST_C"/>
</dbReference>
<dbReference type="InterPro" id="IPR006222">
    <property type="entry name" value="GCV_T_N"/>
</dbReference>
<dbReference type="InterPro" id="IPR028896">
    <property type="entry name" value="GcvT/YgfZ/DmdA"/>
</dbReference>
<dbReference type="InterPro" id="IPR029043">
    <property type="entry name" value="GcvT/YgfZ_C"/>
</dbReference>
<dbReference type="InterPro" id="IPR027266">
    <property type="entry name" value="TrmE/GcvT_dom1"/>
</dbReference>
<dbReference type="NCBIfam" id="TIGR00528">
    <property type="entry name" value="gcvT"/>
    <property type="match status" value="1"/>
</dbReference>
<dbReference type="NCBIfam" id="NF001567">
    <property type="entry name" value="PRK00389.1"/>
    <property type="match status" value="1"/>
</dbReference>
<dbReference type="PANTHER" id="PTHR43757">
    <property type="entry name" value="AMINOMETHYLTRANSFERASE"/>
    <property type="match status" value="1"/>
</dbReference>
<dbReference type="PANTHER" id="PTHR43757:SF2">
    <property type="entry name" value="AMINOMETHYLTRANSFERASE, MITOCHONDRIAL"/>
    <property type="match status" value="1"/>
</dbReference>
<dbReference type="Pfam" id="PF01571">
    <property type="entry name" value="GCV_T"/>
    <property type="match status" value="1"/>
</dbReference>
<dbReference type="Pfam" id="PF08669">
    <property type="entry name" value="GCV_T_C"/>
    <property type="match status" value="1"/>
</dbReference>
<dbReference type="PIRSF" id="PIRSF006487">
    <property type="entry name" value="GcvT"/>
    <property type="match status" value="1"/>
</dbReference>
<dbReference type="SUPFAM" id="SSF101790">
    <property type="entry name" value="Aminomethyltransferase beta-barrel domain"/>
    <property type="match status" value="1"/>
</dbReference>
<dbReference type="SUPFAM" id="SSF103025">
    <property type="entry name" value="Folate-binding domain"/>
    <property type="match status" value="1"/>
</dbReference>
<proteinExistence type="evidence at protein level"/>
<gene>
    <name evidence="4" type="primary">gcvT</name>
    <name type="ordered locus">b2905</name>
    <name type="ordered locus">JW2873</name>
</gene>
<name>GCST_ECOLI</name>
<evidence type="ECO:0000255" key="1">
    <source>
        <dbReference type="HAMAP-Rule" id="MF_00259"/>
    </source>
</evidence>
<evidence type="ECO:0000269" key="2">
    <source>
    </source>
</evidence>
<evidence type="ECO:0000269" key="3">
    <source>
    </source>
</evidence>
<evidence type="ECO:0000303" key="4">
    <source>
    </source>
</evidence>
<evidence type="ECO:0000305" key="5"/>
<evidence type="ECO:0007829" key="6">
    <source>
        <dbReference type="PDB" id="1VLO"/>
    </source>
</evidence>
<evidence type="ECO:0007829" key="7">
    <source>
        <dbReference type="PDB" id="3A8I"/>
    </source>
</evidence>
<comment type="function">
    <text evidence="1 2">The glycine cleavage system catalyzes the degradation of glycine.</text>
</comment>
<comment type="catalytic activity">
    <reaction evidence="1">
        <text>N(6)-[(R)-S(8)-aminomethyldihydrolipoyl]-L-lysyl-[protein] + (6S)-5,6,7,8-tetrahydrofolate = N(6)-[(R)-dihydrolipoyl]-L-lysyl-[protein] + (6R)-5,10-methylene-5,6,7,8-tetrahydrofolate + NH4(+)</text>
        <dbReference type="Rhea" id="RHEA:16945"/>
        <dbReference type="Rhea" id="RHEA-COMP:10475"/>
        <dbReference type="Rhea" id="RHEA-COMP:10492"/>
        <dbReference type="ChEBI" id="CHEBI:15636"/>
        <dbReference type="ChEBI" id="CHEBI:28938"/>
        <dbReference type="ChEBI" id="CHEBI:57453"/>
        <dbReference type="ChEBI" id="CHEBI:83100"/>
        <dbReference type="ChEBI" id="CHEBI:83143"/>
        <dbReference type="EC" id="2.1.2.10"/>
    </reaction>
</comment>
<comment type="subunit">
    <text evidence="1 2">The glycine cleavage system is composed of four proteins: P, T, L and H.</text>
</comment>
<comment type="similarity">
    <text evidence="1 5">Belongs to the GcvT family.</text>
</comment>
<reference key="1">
    <citation type="journal article" date="1993" name="DNA Seq.">
        <title>The Escherichia coli gcvT gene encoding the T-protein of the glycine cleavage enzyme system.</title>
        <authorList>
            <person name="Stauffer L.T."/>
            <person name="Ghrist A."/>
            <person name="Stauffer G.V."/>
        </authorList>
    </citation>
    <scope>NUCLEOTIDE SEQUENCE [GENOMIC DNA]</scope>
    <source>
        <strain>K12</strain>
    </source>
</reference>
<reference key="2">
    <citation type="journal article" date="1993" name="Eur. J. Biochem.">
        <title>Cloning and nucleotide sequence of the gcv operon encoding the Escherichia coli glycine-cleavage system.</title>
        <authorList>
            <person name="Okamura-Ikeda K."/>
            <person name="Ohmura Y."/>
            <person name="Fujiwara K."/>
            <person name="Motokawa Y."/>
        </authorList>
    </citation>
    <scope>NUCLEOTIDE SEQUENCE [GENOMIC DNA]</scope>
    <scope>PROTEIN SEQUENCE OF 2-21</scope>
    <scope>FUNCTION</scope>
    <scope>SUBUNIT</scope>
    <source>
        <strain>K12 / W3110 / ATCC 27325 / DSM 5911</strain>
    </source>
</reference>
<reference key="3">
    <citation type="journal article" date="1997" name="Science">
        <title>The complete genome sequence of Escherichia coli K-12.</title>
        <authorList>
            <person name="Blattner F.R."/>
            <person name="Plunkett G. III"/>
            <person name="Bloch C.A."/>
            <person name="Perna N.T."/>
            <person name="Burland V."/>
            <person name="Riley M."/>
            <person name="Collado-Vides J."/>
            <person name="Glasner J.D."/>
            <person name="Rode C.K."/>
            <person name="Mayhew G.F."/>
            <person name="Gregor J."/>
            <person name="Davis N.W."/>
            <person name="Kirkpatrick H.A."/>
            <person name="Goeden M.A."/>
            <person name="Rose D.J."/>
            <person name="Mau B."/>
            <person name="Shao Y."/>
        </authorList>
    </citation>
    <scope>NUCLEOTIDE SEQUENCE [LARGE SCALE GENOMIC DNA]</scope>
    <source>
        <strain>K12 / MG1655 / ATCC 47076</strain>
    </source>
</reference>
<reference key="4">
    <citation type="journal article" date="2006" name="Mol. Syst. Biol.">
        <title>Highly accurate genome sequences of Escherichia coli K-12 strains MG1655 and W3110.</title>
        <authorList>
            <person name="Hayashi K."/>
            <person name="Morooka N."/>
            <person name="Yamamoto Y."/>
            <person name="Fujita K."/>
            <person name="Isono K."/>
            <person name="Choi S."/>
            <person name="Ohtsubo E."/>
            <person name="Baba T."/>
            <person name="Wanner B.L."/>
            <person name="Mori H."/>
            <person name="Horiuchi T."/>
        </authorList>
    </citation>
    <scope>NUCLEOTIDE SEQUENCE [LARGE SCALE GENOMIC DNA]</scope>
    <source>
        <strain>K12 / W3110 / ATCC 27325 / DSM 5911</strain>
    </source>
</reference>
<reference key="5">
    <citation type="journal article" date="1997" name="Electrophoresis">
        <title>Comparing the predicted and observed properties of proteins encoded in the genome of Escherichia coli K-12.</title>
        <authorList>
            <person name="Link A.J."/>
            <person name="Robison K."/>
            <person name="Church G.M."/>
        </authorList>
    </citation>
    <scope>PROTEIN SEQUENCE OF 2-13</scope>
    <source>
        <strain>K12 / EMG2</strain>
    </source>
</reference>
<organism>
    <name type="scientific">Escherichia coli (strain K12)</name>
    <dbReference type="NCBI Taxonomy" id="83333"/>
    <lineage>
        <taxon>Bacteria</taxon>
        <taxon>Pseudomonadati</taxon>
        <taxon>Pseudomonadota</taxon>
        <taxon>Gammaproteobacteria</taxon>
        <taxon>Enterobacterales</taxon>
        <taxon>Enterobacteriaceae</taxon>
        <taxon>Escherichia</taxon>
    </lineage>
</organism>
<keyword id="KW-0002">3D-structure</keyword>
<keyword id="KW-0032">Aminotransferase</keyword>
<keyword id="KW-0903">Direct protein sequencing</keyword>
<keyword id="KW-1185">Reference proteome</keyword>
<keyword id="KW-0808">Transferase</keyword>